<sequence>MSYLQESNRKAVTVTSLQAMRAAGERIVMLTAYDSSFAALMDRNGTDVLLVGDSLGNVMQGQKTTLPVTLEHIVYHTECVSRGTTKALLVSDLPFGTYGTPEQAFHSAVRVMQAGAQMVKLEGGVWLAPTIKFLVERSIPVCAHIGLTPQSVHAFGGFKVQGRGDEAAAQLKADALAVQDAGAQLVVMEAIPAGLAGEVTRLLAIPTIGIGAGLECSGQVLVMHDMLGVFPGHRPKFVRNFMDGQTTIDGAVAAYVAAVKDGTFPGPEHTFA</sequence>
<dbReference type="EC" id="2.1.2.11" evidence="1"/>
<dbReference type="EMBL" id="CP001068">
    <property type="protein sequence ID" value="ACD27988.1"/>
    <property type="molecule type" value="Genomic_DNA"/>
</dbReference>
<dbReference type="SMR" id="B2UBN8"/>
<dbReference type="STRING" id="402626.Rpic_2865"/>
<dbReference type="KEGG" id="rpi:Rpic_2865"/>
<dbReference type="PATRIC" id="fig|402626.5.peg.4003"/>
<dbReference type="eggNOG" id="COG0413">
    <property type="taxonomic scope" value="Bacteria"/>
</dbReference>
<dbReference type="HOGENOM" id="CLU_036645_1_0_4"/>
<dbReference type="UniPathway" id="UPA00028">
    <property type="reaction ID" value="UER00003"/>
</dbReference>
<dbReference type="GO" id="GO:0005737">
    <property type="term" value="C:cytoplasm"/>
    <property type="evidence" value="ECO:0007669"/>
    <property type="project" value="UniProtKB-SubCell"/>
</dbReference>
<dbReference type="GO" id="GO:0003864">
    <property type="term" value="F:3-methyl-2-oxobutanoate hydroxymethyltransferase activity"/>
    <property type="evidence" value="ECO:0007669"/>
    <property type="project" value="UniProtKB-UniRule"/>
</dbReference>
<dbReference type="GO" id="GO:0000287">
    <property type="term" value="F:magnesium ion binding"/>
    <property type="evidence" value="ECO:0007669"/>
    <property type="project" value="TreeGrafter"/>
</dbReference>
<dbReference type="GO" id="GO:0015940">
    <property type="term" value="P:pantothenate biosynthetic process"/>
    <property type="evidence" value="ECO:0007669"/>
    <property type="project" value="UniProtKB-UniRule"/>
</dbReference>
<dbReference type="CDD" id="cd06557">
    <property type="entry name" value="KPHMT-like"/>
    <property type="match status" value="1"/>
</dbReference>
<dbReference type="FunFam" id="3.20.20.60:FF:000003">
    <property type="entry name" value="3-methyl-2-oxobutanoate hydroxymethyltransferase"/>
    <property type="match status" value="1"/>
</dbReference>
<dbReference type="Gene3D" id="3.20.20.60">
    <property type="entry name" value="Phosphoenolpyruvate-binding domains"/>
    <property type="match status" value="1"/>
</dbReference>
<dbReference type="HAMAP" id="MF_00156">
    <property type="entry name" value="PanB"/>
    <property type="match status" value="1"/>
</dbReference>
<dbReference type="InterPro" id="IPR003700">
    <property type="entry name" value="Pantoate_hydroxy_MeTrfase"/>
</dbReference>
<dbReference type="InterPro" id="IPR015813">
    <property type="entry name" value="Pyrv/PenolPyrv_kinase-like_dom"/>
</dbReference>
<dbReference type="InterPro" id="IPR040442">
    <property type="entry name" value="Pyrv_kinase-like_dom_sf"/>
</dbReference>
<dbReference type="NCBIfam" id="TIGR00222">
    <property type="entry name" value="panB"/>
    <property type="match status" value="1"/>
</dbReference>
<dbReference type="NCBIfam" id="NF001452">
    <property type="entry name" value="PRK00311.1"/>
    <property type="match status" value="1"/>
</dbReference>
<dbReference type="PANTHER" id="PTHR20881">
    <property type="entry name" value="3-METHYL-2-OXOBUTANOATE HYDROXYMETHYLTRANSFERASE"/>
    <property type="match status" value="1"/>
</dbReference>
<dbReference type="PANTHER" id="PTHR20881:SF0">
    <property type="entry name" value="3-METHYL-2-OXOBUTANOATE HYDROXYMETHYLTRANSFERASE"/>
    <property type="match status" value="1"/>
</dbReference>
<dbReference type="Pfam" id="PF02548">
    <property type="entry name" value="Pantoate_transf"/>
    <property type="match status" value="1"/>
</dbReference>
<dbReference type="PIRSF" id="PIRSF000388">
    <property type="entry name" value="Pantoate_hydroxy_MeTrfase"/>
    <property type="match status" value="1"/>
</dbReference>
<dbReference type="SUPFAM" id="SSF51621">
    <property type="entry name" value="Phosphoenolpyruvate/pyruvate domain"/>
    <property type="match status" value="1"/>
</dbReference>
<gene>
    <name evidence="1" type="primary">panB</name>
    <name type="ordered locus">Rpic_2865</name>
</gene>
<comment type="function">
    <text evidence="1">Catalyzes the reversible reaction in which hydroxymethyl group from 5,10-methylenetetrahydrofolate is transferred onto alpha-ketoisovalerate to form ketopantoate.</text>
</comment>
<comment type="catalytic activity">
    <reaction evidence="1">
        <text>3-methyl-2-oxobutanoate + (6R)-5,10-methylene-5,6,7,8-tetrahydrofolate + H2O = 2-dehydropantoate + (6S)-5,6,7,8-tetrahydrofolate</text>
        <dbReference type="Rhea" id="RHEA:11824"/>
        <dbReference type="ChEBI" id="CHEBI:11561"/>
        <dbReference type="ChEBI" id="CHEBI:11851"/>
        <dbReference type="ChEBI" id="CHEBI:15377"/>
        <dbReference type="ChEBI" id="CHEBI:15636"/>
        <dbReference type="ChEBI" id="CHEBI:57453"/>
        <dbReference type="EC" id="2.1.2.11"/>
    </reaction>
</comment>
<comment type="cofactor">
    <cofactor evidence="1">
        <name>Mg(2+)</name>
        <dbReference type="ChEBI" id="CHEBI:18420"/>
    </cofactor>
    <text evidence="1">Binds 1 Mg(2+) ion per subunit.</text>
</comment>
<comment type="pathway">
    <text evidence="1">Cofactor biosynthesis; (R)-pantothenate biosynthesis; (R)-pantoate from 3-methyl-2-oxobutanoate: step 1/2.</text>
</comment>
<comment type="subunit">
    <text evidence="1">Homodecamer; pentamer of dimers.</text>
</comment>
<comment type="subcellular location">
    <subcellularLocation>
        <location evidence="1">Cytoplasm</location>
    </subcellularLocation>
</comment>
<comment type="similarity">
    <text evidence="1">Belongs to the PanB family.</text>
</comment>
<organism>
    <name type="scientific">Ralstonia pickettii (strain 12J)</name>
    <dbReference type="NCBI Taxonomy" id="402626"/>
    <lineage>
        <taxon>Bacteria</taxon>
        <taxon>Pseudomonadati</taxon>
        <taxon>Pseudomonadota</taxon>
        <taxon>Betaproteobacteria</taxon>
        <taxon>Burkholderiales</taxon>
        <taxon>Burkholderiaceae</taxon>
        <taxon>Ralstonia</taxon>
    </lineage>
</organism>
<keyword id="KW-0963">Cytoplasm</keyword>
<keyword id="KW-0460">Magnesium</keyword>
<keyword id="KW-0479">Metal-binding</keyword>
<keyword id="KW-0566">Pantothenate biosynthesis</keyword>
<keyword id="KW-0808">Transferase</keyword>
<evidence type="ECO:0000255" key="1">
    <source>
        <dbReference type="HAMAP-Rule" id="MF_00156"/>
    </source>
</evidence>
<feature type="chain" id="PRO_1000096995" description="3-methyl-2-oxobutanoate hydroxymethyltransferase">
    <location>
        <begin position="1"/>
        <end position="272"/>
    </location>
</feature>
<feature type="active site" description="Proton acceptor" evidence="1">
    <location>
        <position position="189"/>
    </location>
</feature>
<feature type="binding site" evidence="1">
    <location>
        <begin position="53"/>
        <end position="54"/>
    </location>
    <ligand>
        <name>3-methyl-2-oxobutanoate</name>
        <dbReference type="ChEBI" id="CHEBI:11851"/>
    </ligand>
</feature>
<feature type="binding site" evidence="1">
    <location>
        <position position="53"/>
    </location>
    <ligand>
        <name>Mg(2+)</name>
        <dbReference type="ChEBI" id="CHEBI:18420"/>
    </ligand>
</feature>
<feature type="binding site" evidence="1">
    <location>
        <position position="92"/>
    </location>
    <ligand>
        <name>3-methyl-2-oxobutanoate</name>
        <dbReference type="ChEBI" id="CHEBI:11851"/>
    </ligand>
</feature>
<feature type="binding site" evidence="1">
    <location>
        <position position="92"/>
    </location>
    <ligand>
        <name>Mg(2+)</name>
        <dbReference type="ChEBI" id="CHEBI:18420"/>
    </ligand>
</feature>
<feature type="binding site" evidence="1">
    <location>
        <position position="120"/>
    </location>
    <ligand>
        <name>3-methyl-2-oxobutanoate</name>
        <dbReference type="ChEBI" id="CHEBI:11851"/>
    </ligand>
</feature>
<feature type="binding site" evidence="1">
    <location>
        <position position="122"/>
    </location>
    <ligand>
        <name>Mg(2+)</name>
        <dbReference type="ChEBI" id="CHEBI:18420"/>
    </ligand>
</feature>
<proteinExistence type="inferred from homology"/>
<reference key="1">
    <citation type="submission" date="2008-05" db="EMBL/GenBank/DDBJ databases">
        <title>Complete sequence of chromosome 1 of Ralstonia pickettii 12J.</title>
        <authorList>
            <person name="Lucas S."/>
            <person name="Copeland A."/>
            <person name="Lapidus A."/>
            <person name="Glavina del Rio T."/>
            <person name="Dalin E."/>
            <person name="Tice H."/>
            <person name="Bruce D."/>
            <person name="Goodwin L."/>
            <person name="Pitluck S."/>
            <person name="Meincke L."/>
            <person name="Brettin T."/>
            <person name="Detter J.C."/>
            <person name="Han C."/>
            <person name="Kuske C.R."/>
            <person name="Schmutz J."/>
            <person name="Larimer F."/>
            <person name="Land M."/>
            <person name="Hauser L."/>
            <person name="Kyrpides N."/>
            <person name="Mikhailova N."/>
            <person name="Marsh T."/>
            <person name="Richardson P."/>
        </authorList>
    </citation>
    <scope>NUCLEOTIDE SEQUENCE [LARGE SCALE GENOMIC DNA]</scope>
    <source>
        <strain>12J</strain>
    </source>
</reference>
<name>PANB_RALPJ</name>
<accession>B2UBN8</accession>
<protein>
    <recommendedName>
        <fullName evidence="1">3-methyl-2-oxobutanoate hydroxymethyltransferase</fullName>
        <ecNumber evidence="1">2.1.2.11</ecNumber>
    </recommendedName>
    <alternativeName>
        <fullName evidence="1">Ketopantoate hydroxymethyltransferase</fullName>
        <shortName evidence="1">KPHMT</shortName>
    </alternativeName>
</protein>